<organism>
    <name type="scientific">Natronomonas pharaonis (strain ATCC 35678 / DSM 2160 / CIP 103997 / JCM 8858 / NBRC 14720 / NCIMB 2260 / Gabara)</name>
    <name type="common">Halobacterium pharaonis</name>
    <dbReference type="NCBI Taxonomy" id="348780"/>
    <lineage>
        <taxon>Archaea</taxon>
        <taxon>Methanobacteriati</taxon>
        <taxon>Methanobacteriota</taxon>
        <taxon>Stenosarchaea group</taxon>
        <taxon>Halobacteria</taxon>
        <taxon>Halobacteriales</taxon>
        <taxon>Haloarculaceae</taxon>
        <taxon>Natronomonas</taxon>
    </lineage>
</organism>
<comment type="function">
    <text evidence="1">Binds directly to 23S rRNA. Probably involved in E site tRNA release.</text>
</comment>
<comment type="function">
    <text evidence="1">Protein L1 is also a translational repressor protein, it controls the translation of its operon by binding to its mRNA.</text>
</comment>
<comment type="subunit">
    <text evidence="1">Part of the 50S ribosomal subunit.</text>
</comment>
<comment type="similarity">
    <text evidence="1">Belongs to the universal ribosomal protein uL1 family.</text>
</comment>
<reference key="1">
    <citation type="journal article" date="2005" name="Genome Res.">
        <title>Living with two extremes: conclusions from the genome sequence of Natronomonas pharaonis.</title>
        <authorList>
            <person name="Falb M."/>
            <person name="Pfeiffer F."/>
            <person name="Palm P."/>
            <person name="Rodewald K."/>
            <person name="Hickmann V."/>
            <person name="Tittor J."/>
            <person name="Oesterhelt D."/>
        </authorList>
    </citation>
    <scope>NUCLEOTIDE SEQUENCE [LARGE SCALE GENOMIC DNA]</scope>
    <source>
        <strain>ATCC 35678 / DSM 2160 / CIP 103997 / JCM 8858 / NBRC 14720 / NCIMB 2260 / Gabara</strain>
    </source>
</reference>
<sequence>MADSIEDAVSRAMSESPERNFRETVDLAINLRDLDLADPNNRVDESIVLPSGTGQDTHIVVFAEGETALRAEDVADDVLDSDDLEDLGDDDNAAKDLADETDFFIAEADLMQDIGRYLGTVLGPRGKMPTPLQPDDDVVETVNRMKNTVQVRSGERRTFHTRVGAEDMDADAIADNVDVILRRLFTDLEKGPQNIDTVYVKTTMGPAVEVPA</sequence>
<name>RL1_NATPD</name>
<feature type="chain" id="PRO_0000230654" description="Large ribosomal subunit protein uL1">
    <location>
        <begin position="1"/>
        <end position="212"/>
    </location>
</feature>
<dbReference type="EMBL" id="CR936257">
    <property type="protein sequence ID" value="CAI50317.1"/>
    <property type="molecule type" value="Genomic_DNA"/>
</dbReference>
<dbReference type="RefSeq" id="WP_011323932.1">
    <property type="nucleotide sequence ID" value="NC_007426.1"/>
</dbReference>
<dbReference type="SMR" id="Q3INI6"/>
<dbReference type="STRING" id="348780.NP_4452A"/>
<dbReference type="EnsemblBacteria" id="CAI50317">
    <property type="protein sequence ID" value="CAI50317"/>
    <property type="gene ID" value="NP_4452A"/>
</dbReference>
<dbReference type="GeneID" id="3703118"/>
<dbReference type="KEGG" id="nph:NP_4452A"/>
<dbReference type="eggNOG" id="arCOG04289">
    <property type="taxonomic scope" value="Archaea"/>
</dbReference>
<dbReference type="HOGENOM" id="CLU_062853_4_0_2"/>
<dbReference type="OrthoDB" id="10382at2157"/>
<dbReference type="Proteomes" id="UP000002698">
    <property type="component" value="Chromosome"/>
</dbReference>
<dbReference type="GO" id="GO:0015934">
    <property type="term" value="C:large ribosomal subunit"/>
    <property type="evidence" value="ECO:0007669"/>
    <property type="project" value="InterPro"/>
</dbReference>
<dbReference type="GO" id="GO:0019843">
    <property type="term" value="F:rRNA binding"/>
    <property type="evidence" value="ECO:0007669"/>
    <property type="project" value="UniProtKB-UniRule"/>
</dbReference>
<dbReference type="GO" id="GO:0003735">
    <property type="term" value="F:structural constituent of ribosome"/>
    <property type="evidence" value="ECO:0007669"/>
    <property type="project" value="InterPro"/>
</dbReference>
<dbReference type="GO" id="GO:0000049">
    <property type="term" value="F:tRNA binding"/>
    <property type="evidence" value="ECO:0007669"/>
    <property type="project" value="UniProtKB-KW"/>
</dbReference>
<dbReference type="GO" id="GO:0006417">
    <property type="term" value="P:regulation of translation"/>
    <property type="evidence" value="ECO:0007669"/>
    <property type="project" value="UniProtKB-KW"/>
</dbReference>
<dbReference type="GO" id="GO:0006412">
    <property type="term" value="P:translation"/>
    <property type="evidence" value="ECO:0007669"/>
    <property type="project" value="UniProtKB-UniRule"/>
</dbReference>
<dbReference type="CDD" id="cd00403">
    <property type="entry name" value="Ribosomal_L1"/>
    <property type="match status" value="1"/>
</dbReference>
<dbReference type="FunFam" id="3.40.50.790:FF:000005">
    <property type="entry name" value="50S ribosomal protein L1"/>
    <property type="match status" value="1"/>
</dbReference>
<dbReference type="Gene3D" id="3.30.190.20">
    <property type="match status" value="1"/>
</dbReference>
<dbReference type="Gene3D" id="3.40.50.790">
    <property type="match status" value="1"/>
</dbReference>
<dbReference type="HAMAP" id="MF_01318_A">
    <property type="entry name" value="Ribosomal_uL1_A"/>
    <property type="match status" value="1"/>
</dbReference>
<dbReference type="InterPro" id="IPR002143">
    <property type="entry name" value="Ribosomal_uL1"/>
</dbReference>
<dbReference type="InterPro" id="IPR023674">
    <property type="entry name" value="Ribosomal_uL1-like"/>
</dbReference>
<dbReference type="InterPro" id="IPR028364">
    <property type="entry name" value="Ribosomal_uL1/biogenesis"/>
</dbReference>
<dbReference type="InterPro" id="IPR016095">
    <property type="entry name" value="Ribosomal_uL1_3-a/b-sand"/>
</dbReference>
<dbReference type="InterPro" id="IPR023669">
    <property type="entry name" value="Ribosomal_uL1_arc"/>
</dbReference>
<dbReference type="InterPro" id="IPR023673">
    <property type="entry name" value="Ribosomal_uL1_CS"/>
</dbReference>
<dbReference type="NCBIfam" id="NF003244">
    <property type="entry name" value="PRK04203.1"/>
    <property type="match status" value="1"/>
</dbReference>
<dbReference type="PANTHER" id="PTHR36427">
    <property type="entry name" value="54S RIBOSOMAL PROTEIN L1, MITOCHONDRIAL"/>
    <property type="match status" value="1"/>
</dbReference>
<dbReference type="PANTHER" id="PTHR36427:SF3">
    <property type="entry name" value="LARGE RIBOSOMAL SUBUNIT PROTEIN UL1M"/>
    <property type="match status" value="1"/>
</dbReference>
<dbReference type="Pfam" id="PF00687">
    <property type="entry name" value="Ribosomal_L1"/>
    <property type="match status" value="1"/>
</dbReference>
<dbReference type="PIRSF" id="PIRSF002155">
    <property type="entry name" value="Ribosomal_L1"/>
    <property type="match status" value="1"/>
</dbReference>
<dbReference type="SUPFAM" id="SSF56808">
    <property type="entry name" value="Ribosomal protein L1"/>
    <property type="match status" value="1"/>
</dbReference>
<dbReference type="PROSITE" id="PS01199">
    <property type="entry name" value="RIBOSOMAL_L1"/>
    <property type="match status" value="1"/>
</dbReference>
<gene>
    <name evidence="1" type="primary">rpl1</name>
    <name type="ordered locus">NP_4452A</name>
</gene>
<proteinExistence type="inferred from homology"/>
<protein>
    <recommendedName>
        <fullName evidence="1">Large ribosomal subunit protein uL1</fullName>
    </recommendedName>
    <alternativeName>
        <fullName evidence="2">50S ribosomal protein L1</fullName>
    </alternativeName>
</protein>
<keyword id="KW-1185">Reference proteome</keyword>
<keyword id="KW-0678">Repressor</keyword>
<keyword id="KW-0687">Ribonucleoprotein</keyword>
<keyword id="KW-0689">Ribosomal protein</keyword>
<keyword id="KW-0694">RNA-binding</keyword>
<keyword id="KW-0699">rRNA-binding</keyword>
<keyword id="KW-0810">Translation regulation</keyword>
<keyword id="KW-0820">tRNA-binding</keyword>
<evidence type="ECO:0000255" key="1">
    <source>
        <dbReference type="HAMAP-Rule" id="MF_01318"/>
    </source>
</evidence>
<evidence type="ECO:0000305" key="2"/>
<accession>Q3INI6</accession>